<organism>
    <name type="scientific">Pongo abelii</name>
    <name type="common">Sumatran orangutan</name>
    <name type="synonym">Pongo pygmaeus abelii</name>
    <dbReference type="NCBI Taxonomy" id="9601"/>
    <lineage>
        <taxon>Eukaryota</taxon>
        <taxon>Metazoa</taxon>
        <taxon>Chordata</taxon>
        <taxon>Craniata</taxon>
        <taxon>Vertebrata</taxon>
        <taxon>Euteleostomi</taxon>
        <taxon>Mammalia</taxon>
        <taxon>Eutheria</taxon>
        <taxon>Euarchontoglires</taxon>
        <taxon>Primates</taxon>
        <taxon>Haplorrhini</taxon>
        <taxon>Catarrhini</taxon>
        <taxon>Hominidae</taxon>
        <taxon>Pongo</taxon>
    </lineage>
</organism>
<keyword id="KW-0025">Alternative splicing</keyword>
<keyword id="KW-1003">Cell membrane</keyword>
<keyword id="KW-1015">Disulfide bond</keyword>
<keyword id="KW-0449">Lipoprotein</keyword>
<keyword id="KW-0472">Membrane</keyword>
<keyword id="KW-0564">Palmitate</keyword>
<keyword id="KW-0597">Phosphoprotein</keyword>
<keyword id="KW-1185">Reference proteome</keyword>
<keyword id="KW-0812">Transmembrane</keyword>
<keyword id="KW-1133">Transmembrane helix</keyword>
<accession>Q5R6E6</accession>
<accession>Q5R4I5</accession>
<accession>Q5R6Q3</accession>
<name>MYPR_PONAB</name>
<evidence type="ECO:0000250" key="1"/>
<evidence type="ECO:0000250" key="2">
    <source>
        <dbReference type="UniProtKB" id="P60201"/>
    </source>
</evidence>
<evidence type="ECO:0000250" key="3">
    <source>
        <dbReference type="UniProtKB" id="P60203"/>
    </source>
</evidence>
<evidence type="ECO:0000303" key="4">
    <source ref="1"/>
</evidence>
<evidence type="ECO:0000305" key="5"/>
<feature type="chain" id="PRO_0000276759" description="Myelin proteolipid protein">
    <location>
        <begin position="1"/>
        <end position="277"/>
    </location>
</feature>
<feature type="topological domain" description="Cytoplasmic" evidence="5">
    <location>
        <begin position="1"/>
        <end position="9"/>
    </location>
</feature>
<feature type="transmembrane region" description="Helical; Name=1" evidence="5">
    <location>
        <begin position="10"/>
        <end position="36"/>
    </location>
</feature>
<feature type="topological domain" description="Extracellular" evidence="5">
    <location>
        <begin position="37"/>
        <end position="63"/>
    </location>
</feature>
<feature type="transmembrane region" description="Helical; Name=2" evidence="5">
    <location>
        <begin position="64"/>
        <end position="88"/>
    </location>
</feature>
<feature type="topological domain" description="Cytoplasmic" evidence="5">
    <location>
        <begin position="89"/>
        <end position="151"/>
    </location>
</feature>
<feature type="transmembrane region" description="Helical; Name=3" evidence="5">
    <location>
        <begin position="152"/>
        <end position="177"/>
    </location>
</feature>
<feature type="topological domain" description="Extracellular" evidence="5">
    <location>
        <begin position="178"/>
        <end position="233"/>
    </location>
</feature>
<feature type="transmembrane region" description="Helical; Name=4" evidence="5">
    <location>
        <begin position="234"/>
        <end position="260"/>
    </location>
</feature>
<feature type="topological domain" description="Cytoplasmic" evidence="5">
    <location>
        <begin position="261"/>
        <end position="277"/>
    </location>
</feature>
<feature type="modified residue" description="Phosphoserine" evidence="3">
    <location>
        <position position="114"/>
    </location>
</feature>
<feature type="modified residue" description="Phosphothreonine" evidence="3">
    <location>
        <position position="116"/>
    </location>
</feature>
<feature type="modified residue" description="Phosphothreonine" evidence="3">
    <location>
        <position position="118"/>
    </location>
</feature>
<feature type="lipid moiety-binding region" description="S-palmitoyl cysteine" evidence="1">
    <location>
        <position position="6"/>
    </location>
</feature>
<feature type="lipid moiety-binding region" description="S-palmitoyl cysteine" evidence="1">
    <location>
        <position position="7"/>
    </location>
</feature>
<feature type="lipid moiety-binding region" description="S-palmitoyl cysteine" evidence="1">
    <location>
        <position position="10"/>
    </location>
</feature>
<feature type="lipid moiety-binding region" description="S-palmitoyl cysteine" evidence="1">
    <location>
        <position position="109"/>
    </location>
</feature>
<feature type="lipid moiety-binding region" description="S-palmitoyl cysteine" evidence="1">
    <location>
        <position position="139"/>
    </location>
</feature>
<feature type="lipid moiety-binding region" description="S-palmitoyl cysteine" evidence="1">
    <location>
        <position position="141"/>
    </location>
</feature>
<feature type="disulfide bond" evidence="1">
    <location>
        <begin position="184"/>
        <end position="228"/>
    </location>
</feature>
<feature type="disulfide bond" evidence="1">
    <location>
        <begin position="201"/>
        <end position="220"/>
    </location>
</feature>
<feature type="splice variant" id="VSP_022981" description="In isoform 2." evidence="4">
    <location>
        <begin position="117"/>
        <end position="151"/>
    </location>
</feature>
<feature type="sequence conflict" description="In Ref. 1; CAH92557." evidence="5" ref="1">
    <original>R</original>
    <variation>K</variation>
    <location>
        <position position="9"/>
    </location>
</feature>
<comment type="function">
    <text evidence="1">This is the major myelin protein from the central nervous system. It plays an important role in the formation or maintenance of the multilamellar structure of myelin (By similarity).</text>
</comment>
<comment type="subunit">
    <text evidence="2">Interacts with MAL.</text>
</comment>
<comment type="subcellular location">
    <subcellularLocation>
        <location evidence="1">Cell membrane</location>
        <topology evidence="1">Multi-pass membrane protein</topology>
    </subcellularLocation>
    <subcellularLocation>
        <location evidence="1">Myelin membrane</location>
    </subcellularLocation>
    <text evidence="1">Colocalizes with SIRT2 in internodal regions, at paranodal axoglial junction and Schmidt-Lanterman incisures of myelin sheat.</text>
</comment>
<comment type="alternative products">
    <event type="alternative splicing"/>
    <isoform>
        <id>Q5R6E6-1</id>
        <name>1</name>
        <sequence type="displayed"/>
    </isoform>
    <isoform>
        <id>Q5R6E6-2</id>
        <name>2</name>
        <sequence type="described" ref="VSP_022981"/>
    </isoform>
</comment>
<comment type="similarity">
    <text evidence="5">Belongs to the myelin proteolipid protein family.</text>
</comment>
<dbReference type="EMBL" id="CR860432">
    <property type="protein sequence ID" value="CAH92557.1"/>
    <property type="molecule type" value="mRNA"/>
</dbReference>
<dbReference type="EMBL" id="CR860545">
    <property type="protein sequence ID" value="CAH92670.1"/>
    <property type="molecule type" value="mRNA"/>
</dbReference>
<dbReference type="EMBL" id="CR861263">
    <property type="protein sequence ID" value="CAH93331.1"/>
    <property type="molecule type" value="mRNA"/>
</dbReference>
<dbReference type="EMBL" id="CR926047">
    <property type="protein sequence ID" value="CAI29679.1"/>
    <property type="molecule type" value="mRNA"/>
</dbReference>
<dbReference type="RefSeq" id="NP_001126498.2">
    <molecule id="Q5R6E6-1"/>
    <property type="nucleotide sequence ID" value="NM_001133026.3"/>
</dbReference>
<dbReference type="RefSeq" id="NP_001127654.1">
    <molecule id="Q5R6E6-2"/>
    <property type="nucleotide sequence ID" value="NM_001134182.2"/>
</dbReference>
<dbReference type="RefSeq" id="NP_001417552.1">
    <molecule id="Q5R6E6-2"/>
    <property type="nucleotide sequence ID" value="NM_001430623.1"/>
</dbReference>
<dbReference type="RefSeq" id="NP_001417553.1">
    <molecule id="Q5R6E6-2"/>
    <property type="nucleotide sequence ID" value="NM_001430624.1"/>
</dbReference>
<dbReference type="RefSeq" id="XP_009233351.1">
    <property type="nucleotide sequence ID" value="XM_009235076.1"/>
</dbReference>
<dbReference type="RefSeq" id="XP_009233352.1">
    <property type="nucleotide sequence ID" value="XM_009235077.1"/>
</dbReference>
<dbReference type="RefSeq" id="XP_024096106.1">
    <molecule id="Q5R6E6-2"/>
    <property type="nucleotide sequence ID" value="XM_024240338.3"/>
</dbReference>
<dbReference type="RefSeq" id="XP_054400034.1">
    <molecule id="Q5R6E6-1"/>
    <property type="nucleotide sequence ID" value="XM_054544059.2"/>
</dbReference>
<dbReference type="RefSeq" id="XP_054400035.1">
    <molecule id="Q5R6E6-1"/>
    <property type="nucleotide sequence ID" value="XM_054544060.2"/>
</dbReference>
<dbReference type="RefSeq" id="XP_054400036.1">
    <molecule id="Q5R6E6-1"/>
    <property type="nucleotide sequence ID" value="XM_054544061.2"/>
</dbReference>
<dbReference type="SMR" id="Q5R6E6"/>
<dbReference type="FunCoup" id="Q5R6E6">
    <property type="interactions" value="61"/>
</dbReference>
<dbReference type="STRING" id="9601.ENSPPYP00000023045"/>
<dbReference type="Ensembl" id="ENSPPYT00000042281.1">
    <molecule id="Q5R6E6-2"/>
    <property type="protein sequence ID" value="ENSPPYP00000043570.1"/>
    <property type="gene ID" value="ENSPPYG00000020590.3"/>
</dbReference>
<dbReference type="GeneID" id="100173486"/>
<dbReference type="KEGG" id="pon:100173486"/>
<dbReference type="CTD" id="5354"/>
<dbReference type="eggNOG" id="KOG4800">
    <property type="taxonomic scope" value="Eukaryota"/>
</dbReference>
<dbReference type="GeneTree" id="ENSGT00390000006915"/>
<dbReference type="HOGENOM" id="CLU_064167_2_1_1"/>
<dbReference type="InParanoid" id="Q5R6E6"/>
<dbReference type="OrthoDB" id="9993736at2759"/>
<dbReference type="TreeFam" id="TF315162"/>
<dbReference type="Proteomes" id="UP000001595">
    <property type="component" value="Chromosome X"/>
</dbReference>
<dbReference type="GO" id="GO:0043209">
    <property type="term" value="C:myelin sheath"/>
    <property type="evidence" value="ECO:0007669"/>
    <property type="project" value="UniProtKB-SubCell"/>
</dbReference>
<dbReference type="GO" id="GO:0005886">
    <property type="term" value="C:plasma membrane"/>
    <property type="evidence" value="ECO:0000250"/>
    <property type="project" value="UniProtKB"/>
</dbReference>
<dbReference type="GO" id="GO:0019911">
    <property type="term" value="F:structural constituent of myelin sheath"/>
    <property type="evidence" value="ECO:0007669"/>
    <property type="project" value="TreeGrafter"/>
</dbReference>
<dbReference type="GO" id="GO:0061564">
    <property type="term" value="P:axon development"/>
    <property type="evidence" value="ECO:0007669"/>
    <property type="project" value="TreeGrafter"/>
</dbReference>
<dbReference type="GO" id="GO:0022010">
    <property type="term" value="P:central nervous system myelination"/>
    <property type="evidence" value="ECO:0007669"/>
    <property type="project" value="TreeGrafter"/>
</dbReference>
<dbReference type="InterPro" id="IPR001614">
    <property type="entry name" value="Myelin_PLP"/>
</dbReference>
<dbReference type="InterPro" id="IPR018237">
    <property type="entry name" value="Myelin_PLP_CS"/>
</dbReference>
<dbReference type="PANTHER" id="PTHR11683">
    <property type="entry name" value="MYELIN PROTEOLIPID"/>
    <property type="match status" value="1"/>
</dbReference>
<dbReference type="PANTHER" id="PTHR11683:SF11">
    <property type="entry name" value="MYELIN PROTEOLIPID PROTEIN"/>
    <property type="match status" value="1"/>
</dbReference>
<dbReference type="Pfam" id="PF01275">
    <property type="entry name" value="Myelin_PLP"/>
    <property type="match status" value="1"/>
</dbReference>
<dbReference type="PRINTS" id="PR00214">
    <property type="entry name" value="MYELINPLP"/>
</dbReference>
<dbReference type="SMART" id="SM00002">
    <property type="entry name" value="PLP"/>
    <property type="match status" value="1"/>
</dbReference>
<dbReference type="PROSITE" id="PS00575">
    <property type="entry name" value="MYELIN_PLP_1"/>
    <property type="match status" value="1"/>
</dbReference>
<dbReference type="PROSITE" id="PS01004">
    <property type="entry name" value="MYELIN_PLP_2"/>
    <property type="match status" value="1"/>
</dbReference>
<sequence>MGLLECCARCLVGAPFASLVATGLCFFGVALFCGCGHEALTGTEKLIETYFSKNYQDYEYLINVIHAFQYVIYGTASFFFLYGALLLAEGFYTTGAVRQIFGDYKTTICGKGLSATVTGGQKGRGSRGQHQAHSLERVCHCLGKWLGHPDKFVGITYALTVVWLLVFACSAVPVYIYFNTWTTCQSIAFPSKTSASIGSLCADARMYGVLPWNAFPGKVCGSNLLSICKTAEFQMTFHLFIAAFVGAAATLVSLLTFMIAATYNFAVLKLMGRGTKF</sequence>
<reference key="1">
    <citation type="submission" date="2004-11" db="EMBL/GenBank/DDBJ databases">
        <authorList>
            <consortium name="The German cDNA consortium"/>
        </authorList>
    </citation>
    <scope>NUCLEOTIDE SEQUENCE [LARGE SCALE MRNA] (ISOFORMS 1 AND 2)</scope>
    <source>
        <tissue>Brain cortex</tissue>
    </source>
</reference>
<gene>
    <name type="primary">PLP1</name>
</gene>
<proteinExistence type="evidence at transcript level"/>
<protein>
    <recommendedName>
        <fullName>Myelin proteolipid protein</fullName>
        <shortName>PLP</shortName>
    </recommendedName>
    <alternativeName>
        <fullName>Lipophilin</fullName>
    </alternativeName>
</protein>